<feature type="chain" id="PRO_0000331618" description="Protein GAM-1">
    <location>
        <begin position="1"/>
        <end position="282"/>
    </location>
</feature>
<feature type="short sequence motif" description="BC-box-like">
    <location>
        <begin position="251"/>
        <end position="260"/>
    </location>
</feature>
<feature type="mutagenesis site" description="Strong loss of binding to the elongin BC complex.">
    <original>L</original>
    <variation>A</variation>
    <location>
        <position position="252"/>
    </location>
</feature>
<feature type="mutagenesis site" description="Strong loss of binding to the elongin BC complex." evidence="7">
    <original>W</original>
    <variation>A</variation>
    <location>
        <position position="255"/>
    </location>
</feature>
<feature type="mutagenesis site" description="Complete loss of binding to the elongin BC complex, CUL2 and CUL5 proteins. Complete loss of inhibition of sumoylation and antiapoptotic function; when associated with A-265." evidence="7 8">
    <original>L</original>
    <variation>A</variation>
    <location>
        <position position="258"/>
    </location>
</feature>
<feature type="mutagenesis site" description="Loss of antiapoptotic function; when associated with G-265." evidence="7 8">
    <original>L</original>
    <variation>G</variation>
    <location>
        <position position="258"/>
    </location>
</feature>
<feature type="mutagenesis site" description="Loss of antiapoptotic function; when associated with P-265." evidence="7 8">
    <original>L</original>
    <variation>P</variation>
    <location>
        <position position="258"/>
    </location>
</feature>
<feature type="mutagenesis site" description="Complete loss of binding to the elongin BC complex, CUL2 and CUL5 proteins. Complete loss of inhibition of sumoylation and antiapoptotic function; when associated with A-258." evidence="7 8">
    <original>L</original>
    <variation>A</variation>
    <location>
        <position position="265"/>
    </location>
</feature>
<feature type="mutagenesis site" description="Loss of antiapoptotic function; when associated with G-258." evidence="7 8">
    <original>L</original>
    <variation>G</variation>
    <location>
        <position position="265"/>
    </location>
</feature>
<feature type="mutagenesis site" description="Loss of antiapoptotic function; when associated with P-258." evidence="7 8">
    <original>L</original>
    <variation>P</variation>
    <location>
        <position position="265"/>
    </location>
</feature>
<feature type="sequence conflict" description="In Ref. 1; CAA80482." evidence="9" ref="1">
    <original>S</original>
    <variation>F</variation>
    <location>
        <position position="144"/>
    </location>
</feature>
<organismHost>
    <name type="scientific">Galliformes</name>
    <dbReference type="NCBI Taxonomy" id="8976"/>
</organismHost>
<sequence>MARNPFRMFPGDLPYYMGTISFTSVVPVDPSQRNPTTSLREMVTTGLIFNPNLTGEQLREYSFSPLVSMGRKAIFADYEGPQRIIHVTIRGRSAEPKTPSEALIMMEKAVRGAFAVPDWVAREYSDPLPHGITHVGDLGFPIGSVHALKMALDTLKIHVPRGVGVPGYEGLCGTTTIKAPRQYRLLTTGVFTKKDLKRTLPEPFFSRFFNQTPEVCAIKTGKNPFSTEIWCMTLGGDSPAPERNEPRNPHSLQDWARLGVMETCLRMSRRGLGSRHHPYHSL</sequence>
<evidence type="ECO:0000269" key="1">
    <source>
    </source>
</evidence>
<evidence type="ECO:0000269" key="2">
    <source>
    </source>
</evidence>
<evidence type="ECO:0000269" key="3">
    <source>
    </source>
</evidence>
<evidence type="ECO:0000269" key="4">
    <source>
    </source>
</evidence>
<evidence type="ECO:0000269" key="5">
    <source>
    </source>
</evidence>
<evidence type="ECO:0000269" key="6">
    <source>
    </source>
</evidence>
<evidence type="ECO:0000269" key="7">
    <source>
    </source>
</evidence>
<evidence type="ECO:0000269" key="8">
    <source>
    </source>
</evidence>
<evidence type="ECO:0000305" key="9"/>
<comment type="function">
    <text evidence="1 2 3 4 6 7">Early protein essential for viral replication. Strong and global transcriptional activator of both viral and cellular genes. Activates transcription by blocking host retinoblastoma protein (RB) and inhibiting the SUMO pathway. Inhibition of host RB leads to the activation of E2F1-dependent transcription and, in particular, of E2F1-regulated S-phase genes. Stimulation of progression from G1 to S phase allows the virus to efficiently use the cellular DNA replicating machinery to achieve viral genome replication. Blocks the SUMO pathway by targeting the E1 enzyme (SAE1/UBA2 heterodimer) to the ubiquitin-proteasome machinery. Mediates SAE1 degradation possibly through the formation of complexes with either CUL2-elongin BC complex-RBX1 or CUL5-elongin BC complex-RBX1. The degradation of UBA2 is probably a consequent effect of SAE1 disappearance. Inhibits HDAC1 sumoylation, thereby interfering with histone deacetylation mediated by HDAC1, leading to activation of transcription. Mediates induction of heat-shock response. Seems to have an antiapoptotic function.</text>
</comment>
<comment type="subunit">
    <text evidence="1 3 5 6">Interacts with host HDAC1. Interacts with host E1-activating enzyme (SAE1/UBA2 heterodimer). Interacts with host retinoblastoma protein. Seems to form a complex with host E4F1 and HDAC1. Seems to form complexes with either CUL2-elongin BC complex-RBX1 or CUL5-elongin BC complex-RBX1. Interacts with TCEB1/Elongin-C, CUL2 and CUL5 in vitro.</text>
</comment>
<comment type="interaction">
    <interactant intactId="EBI-8642971">
        <id>Q64770</id>
    </interactant>
    <interactant intactId="EBI-1227043">
        <id>Q66K89</id>
        <label>E4F1</label>
    </interactant>
    <organismsDiffer>true</organismsDiffer>
    <experiments>4</experiments>
</comment>
<comment type="subcellular location">
    <subcellularLocation>
        <location evidence="8">Host nucleus</location>
    </subcellularLocation>
</comment>
<comment type="domain">
    <text>The BC-box-like motif could mediate the interaction with host cullin RING ubiquitin ligases.</text>
</comment>
<comment type="sequence caution" evidence="9">
    <conflict type="frameshift">
        <sequence resource="EMBL-CDS" id="CAA80482"/>
    </conflict>
</comment>
<proteinExistence type="evidence at protein level"/>
<gene>
    <name type="ORF">8</name>
</gene>
<organism>
    <name type="scientific">Fowl adenovirus A serotype 1 (strain CELO / Phelps)</name>
    <name type="common">FAdV-1</name>
    <name type="synonym">Avian adenovirus gal1 (strain Phelps)</name>
    <dbReference type="NCBI Taxonomy" id="10553"/>
    <lineage>
        <taxon>Viruses</taxon>
        <taxon>Varidnaviria</taxon>
        <taxon>Bamfordvirae</taxon>
        <taxon>Preplasmiviricota</taxon>
        <taxon>Tectiliviricetes</taxon>
        <taxon>Rowavirales</taxon>
        <taxon>Adenoviridae</taxon>
        <taxon>Aviadenovirus</taxon>
        <taxon>Fowl aviadenovirus A</taxon>
    </lineage>
</organism>
<keyword id="KW-0010">Activator</keyword>
<keyword id="KW-0244">Early protein</keyword>
<keyword id="KW-1048">Host nucleus</keyword>
<keyword id="KW-0945">Host-virus interaction</keyword>
<keyword id="KW-1185">Reference proteome</keyword>
<keyword id="KW-0833">Ubl conjugation pathway</keyword>
<accession>Q64770</accession>
<accession>Q64778</accession>
<name>GAM1_ADEG1</name>
<dbReference type="EMBL" id="Z22864">
    <property type="protein sequence ID" value="CAA80482.1"/>
    <property type="status" value="ALT_FRAME"/>
    <property type="molecule type" value="Genomic_DNA"/>
</dbReference>
<dbReference type="EMBL" id="U46933">
    <property type="protein sequence ID" value="AAC54927.1"/>
    <property type="molecule type" value="Genomic_DNA"/>
</dbReference>
<dbReference type="PIR" id="S33491">
    <property type="entry name" value="S33491"/>
</dbReference>
<dbReference type="RefSeq" id="NP_043901.1">
    <property type="nucleotide sequence ID" value="NC_001720.1"/>
</dbReference>
<dbReference type="IntAct" id="Q64770">
    <property type="interactions" value="2"/>
</dbReference>
<dbReference type="MINT" id="Q64770"/>
<dbReference type="KEGG" id="vg:1733455"/>
<dbReference type="Proteomes" id="UP000001594">
    <property type="component" value="Segment"/>
</dbReference>
<dbReference type="GO" id="GO:0042025">
    <property type="term" value="C:host cell nucleus"/>
    <property type="evidence" value="ECO:0007669"/>
    <property type="project" value="UniProtKB-SubCell"/>
</dbReference>
<protein>
    <recommendedName>
        <fullName>Protein GAM-1</fullName>
    </recommendedName>
    <alternativeName>
        <fullName>Gallus-anti morte protein</fullName>
    </alternativeName>
    <alternativeName>
        <fullName>Gam1</fullName>
    </alternativeName>
</protein>
<reference key="1">
    <citation type="submission" date="1993-05" db="EMBL/GenBank/DDBJ databases">
        <title>Sequence of an Avian Adenovirus (CELO) DNA fragment (11.2-19.2%).</title>
        <authorList>
            <person name="Akopian T.A."/>
            <person name="Kaverina E.N."/>
            <person name="Kruglyak V.A."/>
            <person name="Naroditsky B.S."/>
            <person name="Tikhonenko T.T."/>
        </authorList>
    </citation>
    <scope>NUCLEOTIDE SEQUENCE [GENOMIC DNA]</scope>
</reference>
<reference key="2">
    <citation type="journal article" date="1996" name="J. Virol.">
        <title>The complete DNA sequence and genomic organization of the avian adenovirus CELO.</title>
        <authorList>
            <person name="Chiocca S."/>
            <person name="Kurzbauer R."/>
            <person name="Schaffner G."/>
            <person name="Baker A."/>
            <person name="Mautner V."/>
            <person name="Cotten M."/>
        </authorList>
    </citation>
    <scope>NUCLEOTIDE SEQUENCE [LARGE SCALE GENOMIC DNA]</scope>
</reference>
<reference key="3">
    <citation type="journal article" date="1997" name="J. Virol.">
        <title>Identification of a novel antiapoptotic protein, GAM-1, encoded by the CELO adenovirus.</title>
        <authorList>
            <person name="Chiocca S."/>
            <person name="Baker A."/>
            <person name="Cotten M."/>
        </authorList>
    </citation>
    <scope>IDENTIFICATION</scope>
    <scope>SUBCELLULAR LOCATION</scope>
    <scope>MUTAGENESIS OF LEU-258 AND LEU-265</scope>
</reference>
<reference key="4">
    <citation type="journal article" date="1999" name="J. Virol.">
        <title>Characterization of CELO virus proteins that modulate the pRb/E2F pathway.</title>
        <authorList>
            <person name="Lehrmann H."/>
            <person name="Cotten M."/>
        </authorList>
    </citation>
    <scope>FUNCTION</scope>
    <scope>INTERACTION WITH HOST RETINOBLASTOMA PROTEIN</scope>
</reference>
<reference key="5">
    <citation type="journal article" date="2000" name="Nature">
        <title>Activation of heat-shock response by an adenovirus is essential for virus replication.</title>
        <authorList>
            <person name="Glotzer J.B."/>
            <person name="Saltik M."/>
            <person name="Chiocca S."/>
            <person name="Michou A.-I."/>
            <person name="Moseley P."/>
            <person name="Cotten M."/>
        </authorList>
    </citation>
    <scope>FUNCTION</scope>
</reference>
<reference key="6">
    <citation type="journal article" date="2002" name="Curr. Biol.">
        <title>Histone deacetylase 1 inactivation by an adenovirus early gene product.</title>
        <authorList>
            <person name="Chiocca S."/>
            <person name="Kurtev V."/>
            <person name="Colombo R."/>
            <person name="Boggio R."/>
            <person name="Sciurpi M.T."/>
            <person name="Brosch G."/>
            <person name="Seiser C."/>
            <person name="Draetta G.F."/>
            <person name="Cotten M."/>
        </authorList>
    </citation>
    <scope>FUNCTION</scope>
    <scope>INTERACTION WITH HOST HDAC1</scope>
</reference>
<reference key="7">
    <citation type="journal article" date="2002" name="EMBO Rep.">
        <title>The adenovirus protein Gam1 interferes with sumoylation of histone deacetylase 1.</title>
        <authorList>
            <person name="Colombo R."/>
            <person name="Boggio R."/>
            <person name="Seiser C."/>
            <person name="Draetta G.F."/>
            <person name="Chiocca S."/>
        </authorList>
    </citation>
    <scope>FUNCTION</scope>
</reference>
<reference key="8">
    <citation type="journal article" date="2003" name="Oncogene">
        <title>Modulation of p120E4F transcriptional activity by the Gam1 adenoviral early protein.</title>
        <authorList>
            <person name="Colombo R."/>
            <person name="Draetta G.F."/>
            <person name="Chiocca S."/>
        </authorList>
    </citation>
    <scope>IDENTIFICATION IN A COMPLEX WITH HUMAN E4F1 AND HDAC1</scope>
</reference>
<reference key="9">
    <citation type="journal article" date="2004" name="Mol. Cell">
        <title>A mechanism for inhibiting the SUMO pathway.</title>
        <authorList>
            <person name="Boggio R."/>
            <person name="Colombo R."/>
            <person name="Hay R.T."/>
            <person name="Draetta G.F."/>
            <person name="Chiocca S."/>
        </authorList>
    </citation>
    <scope>FUNCTION</scope>
    <scope>IDENTIFICATION IN A COMPLEX WITH HOST SAE1 AND UBA2</scope>
</reference>
<reference key="10">
    <citation type="journal article" date="2007" name="J. Biol. Chem.">
        <title>Targeting SUMO E1 to ubiquitin ligases: a viral strategy to counteract sumoylation.</title>
        <authorList>
            <person name="Boggio R."/>
            <person name="Passafaro A."/>
            <person name="Chiocca S."/>
        </authorList>
    </citation>
    <scope>FUNCTION</scope>
    <scope>MUTAGENESIS OF TRP-255; LEU-258 AND LEU-265</scope>
</reference>